<feature type="chain" id="PRO_0000071512" description="Serine/threonine-protein phosphatase 1 regulatory subunit 10">
    <location>
        <begin position="1"/>
        <end position="888"/>
    </location>
</feature>
<feature type="domain" description="TFIIS N-terminal" evidence="3">
    <location>
        <begin position="73"/>
        <end position="147"/>
    </location>
</feature>
<feature type="zinc finger region" description="C3H1-type" evidence="4">
    <location>
        <begin position="854"/>
        <end position="882"/>
    </location>
</feature>
<feature type="region of interest" description="Interaction with TOX4" evidence="6">
    <location>
        <begin position="1"/>
        <end position="348"/>
    </location>
</feature>
<feature type="region of interest" description="Disordered" evidence="5">
    <location>
        <begin position="147"/>
        <end position="213"/>
    </location>
</feature>
<feature type="region of interest" description="Disordered" evidence="5">
    <location>
        <begin position="247"/>
        <end position="270"/>
    </location>
</feature>
<feature type="region of interest" description="Disordered" evidence="5">
    <location>
        <begin position="306"/>
        <end position="400"/>
    </location>
</feature>
<feature type="region of interest" description="Necessary for interaction with PPP1CA" evidence="6">
    <location>
        <begin position="388"/>
        <end position="417"/>
    </location>
</feature>
<feature type="region of interest" description="Necessary for interaction with PPP1CC" evidence="2">
    <location>
        <begin position="393"/>
        <end position="408"/>
    </location>
</feature>
<feature type="region of interest" description="Interaction with WDR82" evidence="6">
    <location>
        <begin position="418"/>
        <end position="619"/>
    </location>
</feature>
<feature type="region of interest" description="Disordered" evidence="5">
    <location>
        <begin position="534"/>
        <end position="853"/>
    </location>
</feature>
<feature type="short sequence motif" description="PP1-binding motif" evidence="1">
    <location>
        <begin position="394"/>
        <end position="423"/>
    </location>
</feature>
<feature type="compositionally biased region" description="Basic and acidic residues" evidence="5">
    <location>
        <begin position="153"/>
        <end position="166"/>
    </location>
</feature>
<feature type="compositionally biased region" description="Basic and acidic residues" evidence="5">
    <location>
        <begin position="174"/>
        <end position="196"/>
    </location>
</feature>
<feature type="compositionally biased region" description="Low complexity" evidence="5">
    <location>
        <begin position="248"/>
        <end position="258"/>
    </location>
</feature>
<feature type="compositionally biased region" description="Polar residues" evidence="5">
    <location>
        <begin position="325"/>
        <end position="334"/>
    </location>
</feature>
<feature type="compositionally biased region" description="Gly residues" evidence="5">
    <location>
        <begin position="540"/>
        <end position="551"/>
    </location>
</feature>
<feature type="compositionally biased region" description="Polar residues" evidence="5">
    <location>
        <begin position="583"/>
        <end position="595"/>
    </location>
</feature>
<feature type="compositionally biased region" description="Basic and acidic residues" evidence="5">
    <location>
        <begin position="596"/>
        <end position="611"/>
    </location>
</feature>
<feature type="compositionally biased region" description="Pro residues" evidence="5">
    <location>
        <begin position="644"/>
        <end position="655"/>
    </location>
</feature>
<feature type="compositionally biased region" description="Low complexity" evidence="5">
    <location>
        <begin position="674"/>
        <end position="690"/>
    </location>
</feature>
<feature type="compositionally biased region" description="Gly residues" evidence="5">
    <location>
        <begin position="724"/>
        <end position="762"/>
    </location>
</feature>
<feature type="compositionally biased region" description="Gly residues" evidence="5">
    <location>
        <begin position="784"/>
        <end position="794"/>
    </location>
</feature>
<feature type="compositionally biased region" description="Basic and acidic residues" evidence="5">
    <location>
        <begin position="811"/>
        <end position="851"/>
    </location>
</feature>
<feature type="modified residue" description="Phosphoserine" evidence="2">
    <location>
        <position position="313"/>
    </location>
</feature>
<feature type="modified residue" description="Phosphoserine" evidence="2">
    <location>
        <position position="382"/>
    </location>
</feature>
<feature type="modified residue" description="Phosphothreonine" evidence="1">
    <location>
        <position position="398"/>
    </location>
</feature>
<feature type="modified residue" description="Phosphoserine" evidence="2">
    <location>
        <position position="545"/>
    </location>
</feature>
<feature type="modified residue" description="Phosphoserine" evidence="2">
    <location>
        <position position="591"/>
    </location>
</feature>
<feature type="modified residue" description="Omega-N-methylarginine" evidence="2">
    <location>
        <position position="665"/>
    </location>
</feature>
<feature type="modified residue" description="Omega-N-methylarginine" evidence="11">
    <location>
        <position position="693"/>
    </location>
</feature>
<feature type="modified residue" description="Omega-N-methylarginine" evidence="11">
    <location>
        <position position="737"/>
    </location>
</feature>
<feature type="cross-link" description="Glycyl lysine isopeptide (Lys-Gly) (interchain with G-Cter in SUMO2)" evidence="2">
    <location>
        <position position="179"/>
    </location>
</feature>
<feature type="cross-link" description="Glycyl lysine isopeptide (Lys-Gly) (interchain with G-Cter in SUMO2)" evidence="2">
    <location>
        <position position="262"/>
    </location>
</feature>
<feature type="splice variant" id="VSP_013155" description="In isoform 2." evidence="8">
    <location>
        <begin position="756"/>
        <end position="769"/>
    </location>
</feature>
<feature type="mutagenesis site" description="Loss of interaction with PPP1CA but no effect on interaction with TOX4 or WDR82. Cell cycle arrest at mitosis and cell death. Exhibits normal association with chromosomes but shows defects in the process of chromosome decondensation at late telophase." evidence="6">
    <original>W</original>
    <variation>A</variation>
    <location>
        <position position="401"/>
    </location>
</feature>
<feature type="sequence conflict" description="In Ref. 1; CAD44294." evidence="9" ref="1">
    <original>G</original>
    <variation>A</variation>
    <location>
        <position position="30"/>
    </location>
</feature>
<feature type="sequence conflict" description="In Ref. 1; CAD44294." evidence="9" ref="1">
    <original>T</original>
    <variation>N</variation>
    <location>
        <position position="85"/>
    </location>
</feature>
<feature type="sequence conflict" description="In Ref. 1; CAD44294." evidence="9" ref="1">
    <original>P</original>
    <variation>H</variation>
    <location>
        <position position="171"/>
    </location>
</feature>
<feature type="sequence conflict" description="In Ref. 1; CAD44294." evidence="9" ref="1">
    <original>K</original>
    <variation>N</variation>
    <location>
        <position position="239"/>
    </location>
</feature>
<sequence>MGSGPIDPKELLKGLDSFLTRDGEVKSVDGISKIFSLMKEARKMVSRCTYLNIILQTRAPEVLVKFIDVGGYKLLNNWLTYSKTTNNIPLLQQILLTLQHLPLTVDHLKQNNTAKLVKQLSKSSEDEELRKLASVLVSDWMAVIRSQSSTQPAEKDKKKRKEEGKSRTTLPERPLTEVKAETRAEEAPEKKKEKPKSLRTTAPSHAKFRSTGLELDTPSLVPVKKNSSTVVVSDKYNLKPIPLKRQSATAAPGDAAPPAEKKYKPLNTAPNTTKEIKVKIIPPQPMEGLGFLDALNSAPVPGIKIKKKKKVLSPTAAKPSPFEGKTSTEQSTAKPSSPEPAPPAEPMDTDRPGTPVPPVEVPELMDAASSEPGALDAKPVDSPGDPNQLTRKGRKRKTVTWPEEGKLREYFYFELDETERVNVNKIKDFGEAAKREILSDRHAFETARRLSHDNMEEKVPWVCPRPLVLPSPLVIPGSNSQERYIQAEREKGILQELFLNKESPHEPDPEPYEPIPPKLIPLDEECAMDETPYVETLEPGGSGGSPDGAGGSKLPPVLANLMGSMGAGKSPQGPGGGGINVQEILTSIMGSPNSHPSEELLKQPDYSDKLKQMLVPHGLLGPGPVANGFPPGGPGGPKGMQHFPPGPGGPMPGPHGGPGGPVGPRLLGPPPPSRGGDPFWDGPGDPMRGGPMRGGPGPAPGPYHRGRGGRGGNEPPPPPPFRGARGGRSGGGPPNGRGGPGGGGMVGGGGHRPHEGPGGSMGSGHRSHDGPGGNMGSGHRSHDGPGGNMGGSGGHRSHEGPGHGGPHGHRPHDVPSHRGHDHRGPPPHEHRGHDGHGGGGHRGHDGGHSHGGDMSNRPVCRHFMMKGNCRYENNCAFYHPGVNGPPLP</sequence>
<reference key="1">
    <citation type="submission" date="2002-08" db="EMBL/GenBank/DDBJ databases">
        <title>Genes from major histocompatibility complex (MHC) class I region from HLA-C to HLA-A.</title>
        <authorList>
            <person name="Raha-Chowdhury R."/>
            <person name="Andrews S.R."/>
            <person name="Gruen J.R."/>
            <person name="Weissman S.M."/>
        </authorList>
    </citation>
    <scope>NUCLEOTIDE SEQUENCE [MRNA] (ISOFORM 2)</scope>
    <source>
        <strain>C57BL/6J</strain>
        <tissue>Brain</tissue>
    </source>
</reference>
<reference key="2">
    <citation type="journal article" date="2009" name="PLoS Biol.">
        <title>Lineage-specific biology revealed by a finished genome assembly of the mouse.</title>
        <authorList>
            <person name="Church D.M."/>
            <person name="Goodstadt L."/>
            <person name="Hillier L.W."/>
            <person name="Zody M.C."/>
            <person name="Goldstein S."/>
            <person name="She X."/>
            <person name="Bult C.J."/>
            <person name="Agarwala R."/>
            <person name="Cherry J.L."/>
            <person name="DiCuccio M."/>
            <person name="Hlavina W."/>
            <person name="Kapustin Y."/>
            <person name="Meric P."/>
            <person name="Maglott D."/>
            <person name="Birtle Z."/>
            <person name="Marques A.C."/>
            <person name="Graves T."/>
            <person name="Zhou S."/>
            <person name="Teague B."/>
            <person name="Potamousis K."/>
            <person name="Churas C."/>
            <person name="Place M."/>
            <person name="Herschleb J."/>
            <person name="Runnheim R."/>
            <person name="Forrest D."/>
            <person name="Amos-Landgraf J."/>
            <person name="Schwartz D.C."/>
            <person name="Cheng Z."/>
            <person name="Lindblad-Toh K."/>
            <person name="Eichler E.E."/>
            <person name="Ponting C.P."/>
        </authorList>
    </citation>
    <scope>NUCLEOTIDE SEQUENCE [LARGE SCALE GENOMIC DNA]</scope>
    <source>
        <strain>C57BL/6J</strain>
    </source>
</reference>
<reference key="3">
    <citation type="journal article" date="2004" name="Genome Res.">
        <title>The status, quality, and expansion of the NIH full-length cDNA project: the Mammalian Gene Collection (MGC).</title>
        <authorList>
            <consortium name="The MGC Project Team"/>
        </authorList>
    </citation>
    <scope>NUCLEOTIDE SEQUENCE [LARGE SCALE MRNA] (ISOFORM 1)</scope>
    <source>
        <strain>C57BL/6J</strain>
        <strain>FVB/N</strain>
        <tissue>Brain</tissue>
        <tissue>Mammary cancer</tissue>
    </source>
</reference>
<reference key="4">
    <citation type="journal article" date="2005" name="Science">
        <title>The transcriptional landscape of the mammalian genome.</title>
        <authorList>
            <person name="Carninci P."/>
            <person name="Kasukawa T."/>
            <person name="Katayama S."/>
            <person name="Gough J."/>
            <person name="Frith M.C."/>
            <person name="Maeda N."/>
            <person name="Oyama R."/>
            <person name="Ravasi T."/>
            <person name="Lenhard B."/>
            <person name="Wells C."/>
            <person name="Kodzius R."/>
            <person name="Shimokawa K."/>
            <person name="Bajic V.B."/>
            <person name="Brenner S.E."/>
            <person name="Batalov S."/>
            <person name="Forrest A.R."/>
            <person name="Zavolan M."/>
            <person name="Davis M.J."/>
            <person name="Wilming L.G."/>
            <person name="Aidinis V."/>
            <person name="Allen J.E."/>
            <person name="Ambesi-Impiombato A."/>
            <person name="Apweiler R."/>
            <person name="Aturaliya R.N."/>
            <person name="Bailey T.L."/>
            <person name="Bansal M."/>
            <person name="Baxter L."/>
            <person name="Beisel K.W."/>
            <person name="Bersano T."/>
            <person name="Bono H."/>
            <person name="Chalk A.M."/>
            <person name="Chiu K.P."/>
            <person name="Choudhary V."/>
            <person name="Christoffels A."/>
            <person name="Clutterbuck D.R."/>
            <person name="Crowe M.L."/>
            <person name="Dalla E."/>
            <person name="Dalrymple B.P."/>
            <person name="de Bono B."/>
            <person name="Della Gatta G."/>
            <person name="di Bernardo D."/>
            <person name="Down T."/>
            <person name="Engstrom P."/>
            <person name="Fagiolini M."/>
            <person name="Faulkner G."/>
            <person name="Fletcher C.F."/>
            <person name="Fukushima T."/>
            <person name="Furuno M."/>
            <person name="Futaki S."/>
            <person name="Gariboldi M."/>
            <person name="Georgii-Hemming P."/>
            <person name="Gingeras T.R."/>
            <person name="Gojobori T."/>
            <person name="Green R.E."/>
            <person name="Gustincich S."/>
            <person name="Harbers M."/>
            <person name="Hayashi Y."/>
            <person name="Hensch T.K."/>
            <person name="Hirokawa N."/>
            <person name="Hill D."/>
            <person name="Huminiecki L."/>
            <person name="Iacono M."/>
            <person name="Ikeo K."/>
            <person name="Iwama A."/>
            <person name="Ishikawa T."/>
            <person name="Jakt M."/>
            <person name="Kanapin A."/>
            <person name="Katoh M."/>
            <person name="Kawasawa Y."/>
            <person name="Kelso J."/>
            <person name="Kitamura H."/>
            <person name="Kitano H."/>
            <person name="Kollias G."/>
            <person name="Krishnan S.P."/>
            <person name="Kruger A."/>
            <person name="Kummerfeld S.K."/>
            <person name="Kurochkin I.V."/>
            <person name="Lareau L.F."/>
            <person name="Lazarevic D."/>
            <person name="Lipovich L."/>
            <person name="Liu J."/>
            <person name="Liuni S."/>
            <person name="McWilliam S."/>
            <person name="Madan Babu M."/>
            <person name="Madera M."/>
            <person name="Marchionni L."/>
            <person name="Matsuda H."/>
            <person name="Matsuzawa S."/>
            <person name="Miki H."/>
            <person name="Mignone F."/>
            <person name="Miyake S."/>
            <person name="Morris K."/>
            <person name="Mottagui-Tabar S."/>
            <person name="Mulder N."/>
            <person name="Nakano N."/>
            <person name="Nakauchi H."/>
            <person name="Ng P."/>
            <person name="Nilsson R."/>
            <person name="Nishiguchi S."/>
            <person name="Nishikawa S."/>
            <person name="Nori F."/>
            <person name="Ohara O."/>
            <person name="Okazaki Y."/>
            <person name="Orlando V."/>
            <person name="Pang K.C."/>
            <person name="Pavan W.J."/>
            <person name="Pavesi G."/>
            <person name="Pesole G."/>
            <person name="Petrovsky N."/>
            <person name="Piazza S."/>
            <person name="Reed J."/>
            <person name="Reid J.F."/>
            <person name="Ring B.Z."/>
            <person name="Ringwald M."/>
            <person name="Rost B."/>
            <person name="Ruan Y."/>
            <person name="Salzberg S.L."/>
            <person name="Sandelin A."/>
            <person name="Schneider C."/>
            <person name="Schoenbach C."/>
            <person name="Sekiguchi K."/>
            <person name="Semple C.A."/>
            <person name="Seno S."/>
            <person name="Sessa L."/>
            <person name="Sheng Y."/>
            <person name="Shibata Y."/>
            <person name="Shimada H."/>
            <person name="Shimada K."/>
            <person name="Silva D."/>
            <person name="Sinclair B."/>
            <person name="Sperling S."/>
            <person name="Stupka E."/>
            <person name="Sugiura K."/>
            <person name="Sultana R."/>
            <person name="Takenaka Y."/>
            <person name="Taki K."/>
            <person name="Tammoja K."/>
            <person name="Tan S.L."/>
            <person name="Tang S."/>
            <person name="Taylor M.S."/>
            <person name="Tegner J."/>
            <person name="Teichmann S.A."/>
            <person name="Ueda H.R."/>
            <person name="van Nimwegen E."/>
            <person name="Verardo R."/>
            <person name="Wei C.L."/>
            <person name="Yagi K."/>
            <person name="Yamanishi H."/>
            <person name="Zabarovsky E."/>
            <person name="Zhu S."/>
            <person name="Zimmer A."/>
            <person name="Hide W."/>
            <person name="Bult C."/>
            <person name="Grimmond S.M."/>
            <person name="Teasdale R.D."/>
            <person name="Liu E.T."/>
            <person name="Brusic V."/>
            <person name="Quackenbush J."/>
            <person name="Wahlestedt C."/>
            <person name="Mattick J.S."/>
            <person name="Hume D.A."/>
            <person name="Kai C."/>
            <person name="Sasaki D."/>
            <person name="Tomaru Y."/>
            <person name="Fukuda S."/>
            <person name="Kanamori-Katayama M."/>
            <person name="Suzuki M."/>
            <person name="Aoki J."/>
            <person name="Arakawa T."/>
            <person name="Iida J."/>
            <person name="Imamura K."/>
            <person name="Itoh M."/>
            <person name="Kato T."/>
            <person name="Kawaji H."/>
            <person name="Kawagashira N."/>
            <person name="Kawashima T."/>
            <person name="Kojima M."/>
            <person name="Kondo S."/>
            <person name="Konno H."/>
            <person name="Nakano K."/>
            <person name="Ninomiya N."/>
            <person name="Nishio T."/>
            <person name="Okada M."/>
            <person name="Plessy C."/>
            <person name="Shibata K."/>
            <person name="Shiraki T."/>
            <person name="Suzuki S."/>
            <person name="Tagami M."/>
            <person name="Waki K."/>
            <person name="Watahiki A."/>
            <person name="Okamura-Oho Y."/>
            <person name="Suzuki H."/>
            <person name="Kawai J."/>
            <person name="Hayashizaki Y."/>
        </authorList>
    </citation>
    <scope>NUCLEOTIDE SEQUENCE [LARGE SCALE MRNA] OF 1-273</scope>
    <source>
        <strain>C57BL/6J</strain>
        <tissue>Lung</tissue>
    </source>
</reference>
<reference key="5">
    <citation type="journal article" date="2010" name="Cell">
        <title>A tissue-specific atlas of mouse protein phosphorylation and expression.</title>
        <authorList>
            <person name="Huttlin E.L."/>
            <person name="Jedrychowski M.P."/>
            <person name="Elias J.E."/>
            <person name="Goswami T."/>
            <person name="Rad R."/>
            <person name="Beausoleil S.A."/>
            <person name="Villen J."/>
            <person name="Haas W."/>
            <person name="Sowa M.E."/>
            <person name="Gygi S.P."/>
        </authorList>
    </citation>
    <scope>IDENTIFICATION BY MASS SPECTROMETRY [LARGE SCALE ANALYSIS]</scope>
    <source>
        <tissue>Brain</tissue>
        <tissue>Kidney</tissue>
        <tissue>Spleen</tissue>
        <tissue>Testis</tissue>
    </source>
</reference>
<reference key="6">
    <citation type="journal article" date="2010" name="J. Biol. Chem.">
        <title>Identification and characterization of a novel human PP1 phosphatase complex.</title>
        <authorList>
            <person name="Lee J.H."/>
            <person name="You J."/>
            <person name="Dobrota E."/>
            <person name="Skalnik D.G."/>
        </authorList>
    </citation>
    <scope>IDENTIFICATION IN THE PNUTS-PP1 PHOSPHATASE COMPLEX</scope>
    <scope>FUNCTION</scope>
    <scope>SUBCELLULAR LOCATION</scope>
    <scope>INTERACTION WITH PPP1CA; TOX4 AND WDR82</scope>
    <scope>MUTAGENESIS OF TRP-401</scope>
</reference>
<reference key="7">
    <citation type="journal article" date="2014" name="Mol. Cell. Proteomics">
        <title>Immunoaffinity enrichment and mass spectrometry analysis of protein methylation.</title>
        <authorList>
            <person name="Guo A."/>
            <person name="Gu H."/>
            <person name="Zhou J."/>
            <person name="Mulhern D."/>
            <person name="Wang Y."/>
            <person name="Lee K.A."/>
            <person name="Yang V."/>
            <person name="Aguiar M."/>
            <person name="Kornhauser J."/>
            <person name="Jia X."/>
            <person name="Ren J."/>
            <person name="Beausoleil S.A."/>
            <person name="Silva J.C."/>
            <person name="Vemulapalli V."/>
            <person name="Bedford M.T."/>
            <person name="Comb M.J."/>
        </authorList>
    </citation>
    <scope>METHYLATION [LARGE SCALE ANALYSIS] AT ARG-693 AND ARG-737</scope>
    <scope>IDENTIFICATION BY MASS SPECTROMETRY [LARGE SCALE ANALYSIS]</scope>
    <source>
        <tissue>Brain</tissue>
        <tissue>Embryo</tissue>
    </source>
</reference>
<dbReference type="EMBL" id="AJ504718">
    <property type="protein sequence ID" value="CAD44294.1"/>
    <property type="molecule type" value="mRNA"/>
</dbReference>
<dbReference type="EMBL" id="CR974451">
    <property type="status" value="NOT_ANNOTATED_CDS"/>
    <property type="molecule type" value="Genomic_DNA"/>
</dbReference>
<dbReference type="EMBL" id="BC029765">
    <property type="protein sequence ID" value="AAH29765.1"/>
    <property type="molecule type" value="mRNA"/>
</dbReference>
<dbReference type="EMBL" id="BC052059">
    <property type="protein sequence ID" value="AAH52059.1"/>
    <property type="molecule type" value="mRNA"/>
</dbReference>
<dbReference type="EMBL" id="AK053183">
    <property type="protein sequence ID" value="BAC35301.1"/>
    <property type="molecule type" value="mRNA"/>
</dbReference>
<dbReference type="CCDS" id="CCDS50098.1">
    <molecule id="Q80W00-1"/>
</dbReference>
<dbReference type="RefSeq" id="NP_001157290.1">
    <molecule id="Q80W00-1"/>
    <property type="nucleotide sequence ID" value="NM_001163818.1"/>
</dbReference>
<dbReference type="RefSeq" id="NP_001344669.1">
    <molecule id="Q80W00-1"/>
    <property type="nucleotide sequence ID" value="NM_001357740.1"/>
</dbReference>
<dbReference type="RefSeq" id="NP_001390493.1">
    <molecule id="Q80W00-1"/>
    <property type="nucleotide sequence ID" value="NM_001403564.1"/>
</dbReference>
<dbReference type="RefSeq" id="XP_006524679.1">
    <property type="nucleotide sequence ID" value="XM_006524616.2"/>
</dbReference>
<dbReference type="RefSeq" id="XP_006524680.1">
    <molecule id="Q80W00-1"/>
    <property type="nucleotide sequence ID" value="XM_006524617.2"/>
</dbReference>
<dbReference type="RefSeq" id="XP_006524681.1">
    <property type="nucleotide sequence ID" value="XM_006524618.1"/>
</dbReference>
<dbReference type="RefSeq" id="XP_006524682.1">
    <molecule id="Q80W00-1"/>
    <property type="nucleotide sequence ID" value="XM_006524619.3"/>
</dbReference>
<dbReference type="RefSeq" id="XP_030105758.1">
    <molecule id="Q80W00-1"/>
    <property type="nucleotide sequence ID" value="XM_030249898.2"/>
</dbReference>
<dbReference type="RefSeq" id="XP_036016578.1">
    <molecule id="Q80W00-1"/>
    <property type="nucleotide sequence ID" value="XM_036160685.1"/>
</dbReference>
<dbReference type="BMRB" id="Q80W00"/>
<dbReference type="SMR" id="Q80W00"/>
<dbReference type="BioGRID" id="206343">
    <property type="interactions" value="12"/>
</dbReference>
<dbReference type="DIP" id="DIP-48511N"/>
<dbReference type="FunCoup" id="Q80W00">
    <property type="interactions" value="3072"/>
</dbReference>
<dbReference type="IntAct" id="Q80W00">
    <property type="interactions" value="10"/>
</dbReference>
<dbReference type="STRING" id="10090.ENSMUSP00000084461"/>
<dbReference type="GlyGen" id="Q80W00">
    <property type="glycosylation" value="1 site, 1 N-linked glycan (1 site)"/>
</dbReference>
<dbReference type="iPTMnet" id="Q80W00"/>
<dbReference type="PhosphoSitePlus" id="Q80W00"/>
<dbReference type="jPOST" id="Q80W00"/>
<dbReference type="PaxDb" id="10090-ENSMUSP00000084461"/>
<dbReference type="PeptideAtlas" id="Q80W00"/>
<dbReference type="ProteomicsDB" id="291775">
    <molecule id="Q80W00-1"/>
</dbReference>
<dbReference type="ProteomicsDB" id="291776">
    <molecule id="Q80W00-2"/>
</dbReference>
<dbReference type="Pumba" id="Q80W00"/>
<dbReference type="Antibodypedia" id="26382">
    <property type="antibodies" value="141 antibodies from 30 providers"/>
</dbReference>
<dbReference type="DNASU" id="52040"/>
<dbReference type="Ensembl" id="ENSMUST00000087210.7">
    <molecule id="Q80W00-1"/>
    <property type="protein sequence ID" value="ENSMUSP00000084460.7"/>
    <property type="gene ID" value="ENSMUSG00000039220.17"/>
</dbReference>
<dbReference type="Ensembl" id="ENSMUST00000087211.9">
    <molecule id="Q80W00-1"/>
    <property type="protein sequence ID" value="ENSMUSP00000084461.3"/>
    <property type="gene ID" value="ENSMUSG00000039220.17"/>
</dbReference>
<dbReference type="GeneID" id="52040"/>
<dbReference type="KEGG" id="mmu:52040"/>
<dbReference type="UCSC" id="uc033hdm.1">
    <molecule id="Q80W00-1"/>
    <property type="organism name" value="mouse"/>
</dbReference>
<dbReference type="AGR" id="MGI:1289273"/>
<dbReference type="CTD" id="5514"/>
<dbReference type="MGI" id="MGI:1289273">
    <property type="gene designation" value="Ppp1r10"/>
</dbReference>
<dbReference type="VEuPathDB" id="HostDB:ENSMUSG00000039220"/>
<dbReference type="eggNOG" id="ENOG502QQ2I">
    <property type="taxonomic scope" value="Eukaryota"/>
</dbReference>
<dbReference type="GeneTree" id="ENSGT00940000159263"/>
<dbReference type="HOGENOM" id="CLU_019410_0_0_1"/>
<dbReference type="InParanoid" id="Q80W00"/>
<dbReference type="OMA" id="NGPPQIW"/>
<dbReference type="OrthoDB" id="2138378at2759"/>
<dbReference type="PhylomeDB" id="Q80W00"/>
<dbReference type="TreeFam" id="TF105541"/>
<dbReference type="BioGRID-ORCS" id="52040">
    <property type="hits" value="28 hits in 82 CRISPR screens"/>
</dbReference>
<dbReference type="ChiTaRS" id="Ppp1r10">
    <property type="organism name" value="mouse"/>
</dbReference>
<dbReference type="PRO" id="PR:Q80W00"/>
<dbReference type="Proteomes" id="UP000000589">
    <property type="component" value="Chromosome 17"/>
</dbReference>
<dbReference type="RNAct" id="Q80W00">
    <property type="molecule type" value="protein"/>
</dbReference>
<dbReference type="Bgee" id="ENSMUSG00000039220">
    <property type="expression patterns" value="Expressed in primary oocyte and 69 other cell types or tissues"/>
</dbReference>
<dbReference type="ExpressionAtlas" id="Q80W00">
    <property type="expression patterns" value="baseline and differential"/>
</dbReference>
<dbReference type="GO" id="GO:0000785">
    <property type="term" value="C:chromatin"/>
    <property type="evidence" value="ECO:0000314"/>
    <property type="project" value="UniProtKB"/>
</dbReference>
<dbReference type="GO" id="GO:0000781">
    <property type="term" value="C:chromosome, telomeric region"/>
    <property type="evidence" value="ECO:0007669"/>
    <property type="project" value="Ensembl"/>
</dbReference>
<dbReference type="GO" id="GO:0016604">
    <property type="term" value="C:nuclear body"/>
    <property type="evidence" value="ECO:0007669"/>
    <property type="project" value="Ensembl"/>
</dbReference>
<dbReference type="GO" id="GO:0072357">
    <property type="term" value="C:PTW/PP1 phosphatase complex"/>
    <property type="evidence" value="ECO:0000314"/>
    <property type="project" value="UniProtKB"/>
</dbReference>
<dbReference type="GO" id="GO:0003677">
    <property type="term" value="F:DNA binding"/>
    <property type="evidence" value="ECO:0007669"/>
    <property type="project" value="UniProtKB-KW"/>
</dbReference>
<dbReference type="GO" id="GO:0140767">
    <property type="term" value="F:enzyme-substrate adaptor activity"/>
    <property type="evidence" value="ECO:0000250"/>
    <property type="project" value="UniProtKB"/>
</dbReference>
<dbReference type="GO" id="GO:0008157">
    <property type="term" value="F:protein phosphatase 1 binding"/>
    <property type="evidence" value="ECO:0007669"/>
    <property type="project" value="Ensembl"/>
</dbReference>
<dbReference type="GO" id="GO:0004864">
    <property type="term" value="F:protein phosphatase inhibitor activity"/>
    <property type="evidence" value="ECO:0007669"/>
    <property type="project" value="UniProtKB-KW"/>
</dbReference>
<dbReference type="GO" id="GO:0019888">
    <property type="term" value="F:protein phosphatase regulator activity"/>
    <property type="evidence" value="ECO:0000250"/>
    <property type="project" value="UniProtKB"/>
</dbReference>
<dbReference type="GO" id="GO:0003723">
    <property type="term" value="F:RNA binding"/>
    <property type="evidence" value="ECO:0007669"/>
    <property type="project" value="UniProtKB-KW"/>
</dbReference>
<dbReference type="GO" id="GO:0008270">
    <property type="term" value="F:zinc ion binding"/>
    <property type="evidence" value="ECO:0007669"/>
    <property type="project" value="UniProtKB-KW"/>
</dbReference>
<dbReference type="GO" id="GO:0010667">
    <property type="term" value="P:negative regulation of cardiac muscle cell apoptotic process"/>
    <property type="evidence" value="ECO:0007669"/>
    <property type="project" value="Ensembl"/>
</dbReference>
<dbReference type="GO" id="GO:1904290">
    <property type="term" value="P:negative regulation of mitotic DNA damage checkpoint"/>
    <property type="evidence" value="ECO:0007669"/>
    <property type="project" value="Ensembl"/>
</dbReference>
<dbReference type="GO" id="GO:0034244">
    <property type="term" value="P:negative regulation of transcription elongation by RNA polymerase II"/>
    <property type="evidence" value="ECO:0000250"/>
    <property type="project" value="UniProtKB"/>
</dbReference>
<dbReference type="GO" id="GO:0032206">
    <property type="term" value="P:positive regulation of telomere maintenance"/>
    <property type="evidence" value="ECO:0007669"/>
    <property type="project" value="Ensembl"/>
</dbReference>
<dbReference type="GO" id="GO:2000806">
    <property type="term" value="P:positive regulation of termination of RNA polymerase II transcription, poly(A)-coupled"/>
    <property type="evidence" value="ECO:0000250"/>
    <property type="project" value="UniProtKB"/>
</dbReference>
<dbReference type="GO" id="GO:0032968">
    <property type="term" value="P:positive regulation of transcription elongation by RNA polymerase II"/>
    <property type="evidence" value="ECO:0000250"/>
    <property type="project" value="UniProtKB"/>
</dbReference>
<dbReference type="GO" id="GO:0050821">
    <property type="term" value="P:protein stabilization"/>
    <property type="evidence" value="ECO:0007669"/>
    <property type="project" value="Ensembl"/>
</dbReference>
<dbReference type="GO" id="GO:0001111">
    <property type="term" value="P:RNA polymerase II promoter clearance"/>
    <property type="evidence" value="ECO:0000250"/>
    <property type="project" value="UniProtKB"/>
</dbReference>
<dbReference type="CDD" id="cd00183">
    <property type="entry name" value="TFIIS_I"/>
    <property type="match status" value="1"/>
</dbReference>
<dbReference type="FunFam" id="1.20.930.10:FF:000006">
    <property type="entry name" value="Serine/threonine-protein phosphatase 1 regulatory subunit 10"/>
    <property type="match status" value="1"/>
</dbReference>
<dbReference type="Gene3D" id="1.20.930.10">
    <property type="entry name" value="Conserved domain common to transcription factors TFIIS, elongin A, CRSP70"/>
    <property type="match status" value="1"/>
</dbReference>
<dbReference type="InterPro" id="IPR003617">
    <property type="entry name" value="TFIIS/CRSP70_N_sub"/>
</dbReference>
<dbReference type="InterPro" id="IPR035441">
    <property type="entry name" value="TFIIS/LEDGF_dom_sf"/>
</dbReference>
<dbReference type="InterPro" id="IPR017923">
    <property type="entry name" value="TFIIS_N"/>
</dbReference>
<dbReference type="InterPro" id="IPR000571">
    <property type="entry name" value="Znf_CCCH"/>
</dbReference>
<dbReference type="InterPro" id="IPR036855">
    <property type="entry name" value="Znf_CCCH_sf"/>
</dbReference>
<dbReference type="PANTHER" id="PTHR46557">
    <property type="entry name" value="SERINE/THREONINE-PROTEIN PHOSPHATASE 1 REGULATORY SUBUNIT 10-RELATED"/>
    <property type="match status" value="1"/>
</dbReference>
<dbReference type="PANTHER" id="PTHR46557:SF1">
    <property type="entry name" value="SERINE_THREONINE-PROTEIN PHOSPHATASE 1 REGULATORY SUBUNIT 10"/>
    <property type="match status" value="1"/>
</dbReference>
<dbReference type="Pfam" id="PF08711">
    <property type="entry name" value="Med26"/>
    <property type="match status" value="1"/>
</dbReference>
<dbReference type="Pfam" id="PF00642">
    <property type="entry name" value="zf-CCCH"/>
    <property type="match status" value="1"/>
</dbReference>
<dbReference type="SMART" id="SM00509">
    <property type="entry name" value="TFS2N"/>
    <property type="match status" value="1"/>
</dbReference>
<dbReference type="SMART" id="SM00356">
    <property type="entry name" value="ZnF_C3H1"/>
    <property type="match status" value="1"/>
</dbReference>
<dbReference type="SUPFAM" id="SSF90229">
    <property type="entry name" value="CCCH zinc finger"/>
    <property type="match status" value="1"/>
</dbReference>
<dbReference type="SUPFAM" id="SSF47676">
    <property type="entry name" value="Conserved domain common to transcription factors TFIIS, elongin A, CRSP70"/>
    <property type="match status" value="1"/>
</dbReference>
<dbReference type="PROSITE" id="PS51319">
    <property type="entry name" value="TFIIS_N"/>
    <property type="match status" value="1"/>
</dbReference>
<dbReference type="PROSITE" id="PS50103">
    <property type="entry name" value="ZF_C3H1"/>
    <property type="match status" value="1"/>
</dbReference>
<protein>
    <recommendedName>
        <fullName evidence="9">Serine/threonine-protein phosphatase 1 regulatory subunit 10</fullName>
    </recommendedName>
    <alternativeName>
        <fullName>MHC class I region proline-rich protein CAT53</fullName>
    </alternativeName>
    <alternativeName>
        <fullName evidence="7">Phosphatase 1 nuclear targeting subunit</fullName>
    </alternativeName>
</protein>
<evidence type="ECO:0000250" key="1">
    <source>
        <dbReference type="UniProtKB" id="O55000"/>
    </source>
</evidence>
<evidence type="ECO:0000250" key="2">
    <source>
        <dbReference type="UniProtKB" id="Q96QC0"/>
    </source>
</evidence>
<evidence type="ECO:0000255" key="3">
    <source>
        <dbReference type="PROSITE-ProRule" id="PRU00649"/>
    </source>
</evidence>
<evidence type="ECO:0000255" key="4">
    <source>
        <dbReference type="PROSITE-ProRule" id="PRU00723"/>
    </source>
</evidence>
<evidence type="ECO:0000256" key="5">
    <source>
        <dbReference type="SAM" id="MobiDB-lite"/>
    </source>
</evidence>
<evidence type="ECO:0000269" key="6">
    <source>
    </source>
</evidence>
<evidence type="ECO:0000303" key="7">
    <source>
    </source>
</evidence>
<evidence type="ECO:0000303" key="8">
    <source ref="1"/>
</evidence>
<evidence type="ECO:0000305" key="9"/>
<evidence type="ECO:0000312" key="10">
    <source>
        <dbReference type="MGI" id="MGI:1289273"/>
    </source>
</evidence>
<evidence type="ECO:0007744" key="11">
    <source>
    </source>
</evidence>
<gene>
    <name evidence="10" type="primary">Ppp1r10</name>
    <name type="synonym">Cat53</name>
    <name evidence="7" type="synonym">Pnuts</name>
</gene>
<proteinExistence type="evidence at protein level"/>
<accession>Q80W00</accession>
<accession>B1B179</accession>
<accession>Q811B6</accession>
<accession>Q8C6T7</accession>
<accession>Q8K2U8</accession>
<comment type="function">
    <text evidence="2 6">Substrate-recognition component of the PNUTS-PP1 protein phosphatase complex, a protein phosphatase 1 (PP1) complex that promotes RNA polymerase II transcription pause-release, allowing transcription elongation (By similarity). Promoter-proximal pausing by RNA polymerase II is a transcription halt following transcription initiation but prior to elongation, which acts as a checkpoint to control that transcripts are favorably configured for transcriptional elongation (By similarity). The PNUTS-PP1 complex mediates the release of RNA polymerase II from promoter-proximal region of genes by catalyzing dephosphorylation of proteins involved in transcription, such as AFF4, CDK9, MEPCE, INTS12, NCBP1, POLR2M/GDOWN1 and SUPT6H (By similarity). The PNUTS-PP1 complex also regulates RNA polymerase II transcription termination by mediating dephosphorylation of SUPT5H in termination zones downstream of poly(A) sites, thereby promoting deceleration of RNA polymerase II transcription (By similarity). PNUTS-PP1 complex is also involved in the response to replication stress by mediating dephosphorylation of POLR2A at 'Ser-5' of the CTD, promoting RNA polymerase II degradation (By similarity). The PNUTS-PP1 complex also plays a role in the control of chromatin structure and cell cycle progression during the transition from mitosis into interphase (PubMed:20516061). PNUTS-PP1 complex mediates dephosphorylation of MYC, promoting MYC stability by preventing MYC ubiquitination by the SCF(FBXW7) complex. In addition to acts as a substrate-recognition component, PPP1R10/PNUTS also acts as a nuclear targeting subunit for the PNUTS-PP1 complex. In some context, PPP1R10/PNUTS also acts as an inhibitor of protein phosphatase 1 (PP1) activity by preventing access to substrates, such as RB (By similarity).</text>
</comment>
<comment type="subunit">
    <text evidence="6">Component of the PNUTS-PP1 complex (also named PTW/PP1 complex), composed of PPP1R10/PNUTS, TOX4, WDR82, and PPP1CA (or PPP1CB or PPP1CC).</text>
</comment>
<comment type="interaction">
    <interactant intactId="EBI-2553719">
        <id>Q80W00</id>
    </interactant>
    <interactant intactId="EBI-706637">
        <id>Q15554</id>
        <label>TERF2</label>
    </interactant>
    <organismsDiffer>true</organismsDiffer>
    <experiments>3</experiments>
</comment>
<comment type="subcellular location">
    <subcellularLocation>
        <location evidence="2 3">Nucleus</location>
    </subcellularLocation>
    <subcellularLocation>
        <location evidence="6">Chromosome</location>
    </subcellularLocation>
    <text evidence="2 6">Found in discrete nucleoplasmic bodies and within nucleoli. Associates with RNA polymerase II (Pol II) on chromatin during pause-release checkpoint (By similarity). Associates with chromatin during interphase, excluded from condensed chromosomes during early mitosis and is reloaded onto chromosomes at the late telophase (PubMed:20516061).</text>
</comment>
<comment type="alternative products">
    <event type="alternative splicing"/>
    <isoform>
        <id>Q80W00-1</id>
        <name>1</name>
        <sequence type="displayed"/>
    </isoform>
    <isoform>
        <id>Q80W00-2</id>
        <name>2</name>
        <sequence type="described" ref="VSP_013155"/>
    </isoform>
</comment>
<comment type="domain">
    <text evidence="2">The TFIIS N-terminal domain specifically recognizes disordered sequences in protein substrates that are then dephosphorylated by PPP1CA (or PPP1CB or PPP1CC).</text>
</comment>
<comment type="PTM">
    <text evidence="1">Phosphorylated on Ser-398 by PKA within the region necessary for interaction with PPP1CA.</text>
</comment>
<keyword id="KW-0025">Alternative splicing</keyword>
<keyword id="KW-0158">Chromosome</keyword>
<keyword id="KW-0238">DNA-binding</keyword>
<keyword id="KW-1017">Isopeptide bond</keyword>
<keyword id="KW-0479">Metal-binding</keyword>
<keyword id="KW-0488">Methylation</keyword>
<keyword id="KW-0539">Nucleus</keyword>
<keyword id="KW-0597">Phosphoprotein</keyword>
<keyword id="KW-1185">Reference proteome</keyword>
<keyword id="KW-0694">RNA-binding</keyword>
<keyword id="KW-0832">Ubl conjugation</keyword>
<keyword id="KW-0862">Zinc</keyword>
<keyword id="KW-0863">Zinc-finger</keyword>
<organism>
    <name type="scientific">Mus musculus</name>
    <name type="common">Mouse</name>
    <dbReference type="NCBI Taxonomy" id="10090"/>
    <lineage>
        <taxon>Eukaryota</taxon>
        <taxon>Metazoa</taxon>
        <taxon>Chordata</taxon>
        <taxon>Craniata</taxon>
        <taxon>Vertebrata</taxon>
        <taxon>Euteleostomi</taxon>
        <taxon>Mammalia</taxon>
        <taxon>Eutheria</taxon>
        <taxon>Euarchontoglires</taxon>
        <taxon>Glires</taxon>
        <taxon>Rodentia</taxon>
        <taxon>Myomorpha</taxon>
        <taxon>Muroidea</taxon>
        <taxon>Muridae</taxon>
        <taxon>Murinae</taxon>
        <taxon>Mus</taxon>
        <taxon>Mus</taxon>
    </lineage>
</organism>
<name>PP1RA_MOUSE</name>